<reference key="1">
    <citation type="journal article" date="1997" name="Gene">
        <title>Bacteriophage B103: complete DNA sequence of its genome and relationship to other Bacillus phages.</title>
        <authorList>
            <person name="Pecenkova T."/>
            <person name="Benes V."/>
            <person name="Paces J."/>
            <person name="Vlcek C."/>
            <person name="Paces V."/>
        </authorList>
    </citation>
    <scope>NUCLEOTIDE SEQUENCE [LARGE SCALE GENOMIC DNA]</scope>
</reference>
<protein>
    <recommendedName>
        <fullName evidence="1">Capsid fiber protein</fullName>
    </recommendedName>
    <alternativeName>
        <fullName evidence="1">Gene product 8.5</fullName>
        <shortName evidence="1">gp8.5</shortName>
    </alternativeName>
    <alternativeName>
        <fullName evidence="1">Head fiber protein</fullName>
    </alternativeName>
    <alternativeName>
        <fullName evidence="1">Protein p8.5</fullName>
    </alternativeName>
</protein>
<dbReference type="EMBL" id="X99260">
    <property type="protein sequence ID" value="CAA67656.1"/>
    <property type="molecule type" value="Genomic_DNA"/>
</dbReference>
<dbReference type="RefSeq" id="NP_690642.1">
    <property type="nucleotide sequence ID" value="NC_004165.1"/>
</dbReference>
<dbReference type="SMR" id="Q37889"/>
<dbReference type="KEGG" id="vg:955367"/>
<dbReference type="Proteomes" id="UP000000971">
    <property type="component" value="Segment"/>
</dbReference>
<dbReference type="GO" id="GO:0044423">
    <property type="term" value="C:virion component"/>
    <property type="evidence" value="ECO:0007669"/>
    <property type="project" value="UniProtKB-KW"/>
</dbReference>
<dbReference type="GO" id="GO:0046718">
    <property type="term" value="P:symbiont entry into host cell"/>
    <property type="evidence" value="ECO:0007669"/>
    <property type="project" value="UniProtKB-KW"/>
</dbReference>
<dbReference type="GO" id="GO:0019062">
    <property type="term" value="P:virion attachment to host cell"/>
    <property type="evidence" value="ECO:0007669"/>
    <property type="project" value="UniProtKB-KW"/>
</dbReference>
<dbReference type="Gene3D" id="6.10.140.1630">
    <property type="match status" value="1"/>
</dbReference>
<dbReference type="InterPro" id="IPR022741">
    <property type="entry name" value="Phage_B103_Gp8"/>
</dbReference>
<dbReference type="Pfam" id="PF11133">
    <property type="entry name" value="Phage_head_fibr"/>
    <property type="match status" value="1"/>
</dbReference>
<keyword id="KW-0945">Host-virus interaction</keyword>
<keyword id="KW-0426">Late protein</keyword>
<keyword id="KW-1161">Viral attachment to host cell</keyword>
<keyword id="KW-0946">Virion</keyword>
<keyword id="KW-1160">Virus entry into host cell</keyword>
<proteinExistence type="inferred from homology"/>
<feature type="chain" id="PRO_0000106577" description="Capsid fiber protein">
    <location>
        <begin position="1"/>
        <end position="283"/>
    </location>
</feature>
<gene>
    <name type="primary">8.5</name>
</gene>
<comment type="function">
    <text evidence="1">Protein that forms the 55 capsid fibers. These fibers are not always present and may have been lost in some lab strains. They may enhance the attachment of the virions onto the host cell wall.</text>
</comment>
<comment type="subunit">
    <text evidence="1">Homotrimer. Forms a super helix coiled coil in the homotrimer.</text>
</comment>
<comment type="subcellular location">
    <subcellularLocation>
        <location evidence="1">Virion</location>
    </subcellularLocation>
</comment>
<comment type="similarity">
    <text evidence="2">Belongs to the phi29likevirus major capsid fiber protein family.</text>
</comment>
<organismHost>
    <name type="scientific">Bacillus subtilis</name>
    <dbReference type="NCBI Taxonomy" id="1423"/>
</organismHost>
<evidence type="ECO:0000250" key="1">
    <source>
        <dbReference type="UniProtKB" id="B3VMP4"/>
    </source>
</evidence>
<evidence type="ECO:0000305" key="2"/>
<name>CAPSF_BPB03</name>
<accession>Q37889</accession>
<organism>
    <name type="scientific">Bacillus phage B103</name>
    <name type="common">Bacteriophage B103</name>
    <dbReference type="NCBI Taxonomy" id="2994042"/>
    <lineage>
        <taxon>Viruses</taxon>
        <taxon>Duplodnaviria</taxon>
        <taxon>Heunggongvirae</taxon>
        <taxon>Uroviricota</taxon>
        <taxon>Caudoviricetes</taxon>
        <taxon>Salasmaviridae</taxon>
        <taxon>Picovirinae</taxon>
        <taxon>Beecentumtrevirus</taxon>
        <taxon>Beecentumtrevirus B103</taxon>
    </lineage>
</organism>
<sequence>MYSFTAYANSVIVAFHLLKFSSSENNIEISYADEDTIPEYVSIRDLNAGDKTTVELYPLVAWKVIAQEDISTGDRVSVGKNGQVKKTTDMRTTFGYAVSPAKAGQLVTVAISTVFDTIITPDDLGDVDDDVKAFLKSNTTDENKSNLRELLVADADVKALLSGSTTDANKAKLRDLLFSNLDVKAFLSGSTSEDNKVNLRNLLVSNPAILAFLNANPDTDTQTTLRTMIGAGTPYTLPAATTTTLGGVKRMPAIANSTATDVATLVKDFNNLLAALRTAGHSL</sequence>